<comment type="function">
    <text>This protein found in the seeds of many leguminous and non-leguminous plants is the source of sulfur-containing amino acids in seed meals.</text>
</comment>
<comment type="subunit">
    <text>Hexamer; each subunit is composed of an acidic and a basic chain derived from a single precursor and linked by a disulfide bond.</text>
</comment>
<comment type="similarity">
    <text evidence="3">Belongs to the 11S seed storage protein (globulins) family.</text>
</comment>
<gene>
    <name type="primary">LEB6</name>
</gene>
<name>LEGB6_VICFA</name>
<dbReference type="EMBL" id="X14240">
    <property type="protein sequence ID" value="CAA32456.1"/>
    <property type="molecule type" value="Genomic_DNA"/>
</dbReference>
<dbReference type="PIR" id="S07577">
    <property type="entry name" value="S07577"/>
</dbReference>
<dbReference type="SMR" id="P16079"/>
<dbReference type="GO" id="GO:0045735">
    <property type="term" value="F:nutrient reservoir activity"/>
    <property type="evidence" value="ECO:0007669"/>
    <property type="project" value="UniProtKB-KW"/>
</dbReference>
<dbReference type="CDD" id="cd02243">
    <property type="entry name" value="cupin_11S_legumin_C"/>
    <property type="match status" value="1"/>
</dbReference>
<dbReference type="FunFam" id="2.60.120.10:FF:000073">
    <property type="entry name" value="Glycinin G1"/>
    <property type="match status" value="1"/>
</dbReference>
<dbReference type="Gene3D" id="2.60.120.10">
    <property type="entry name" value="Jelly Rolls"/>
    <property type="match status" value="2"/>
</dbReference>
<dbReference type="InterPro" id="IPR022379">
    <property type="entry name" value="11S_seedstore_CS"/>
</dbReference>
<dbReference type="InterPro" id="IPR006044">
    <property type="entry name" value="11S_seedstore_pln"/>
</dbReference>
<dbReference type="InterPro" id="IPR006045">
    <property type="entry name" value="Cupin_1"/>
</dbReference>
<dbReference type="InterPro" id="IPR014710">
    <property type="entry name" value="RmlC-like_jellyroll"/>
</dbReference>
<dbReference type="InterPro" id="IPR011051">
    <property type="entry name" value="RmlC_Cupin_sf"/>
</dbReference>
<dbReference type="InterPro" id="IPR050253">
    <property type="entry name" value="Seed_Storage-Functional"/>
</dbReference>
<dbReference type="PANTHER" id="PTHR31189:SF63">
    <property type="entry name" value="GLYCININ G5"/>
    <property type="match status" value="1"/>
</dbReference>
<dbReference type="PANTHER" id="PTHR31189">
    <property type="entry name" value="OS03G0336100 PROTEIN-RELATED"/>
    <property type="match status" value="1"/>
</dbReference>
<dbReference type="Pfam" id="PF00190">
    <property type="entry name" value="Cupin_1"/>
    <property type="match status" value="1"/>
</dbReference>
<dbReference type="PRINTS" id="PR00439">
    <property type="entry name" value="11SGLOBULIN"/>
</dbReference>
<dbReference type="SMART" id="SM00835">
    <property type="entry name" value="Cupin_1"/>
    <property type="match status" value="1"/>
</dbReference>
<dbReference type="SUPFAM" id="SSF51182">
    <property type="entry name" value="RmlC-like cupins"/>
    <property type="match status" value="1"/>
</dbReference>
<dbReference type="PROSITE" id="PS00305">
    <property type="entry name" value="11S_SEED_STORAGE"/>
    <property type="match status" value="1"/>
</dbReference>
<protein>
    <recommendedName>
        <fullName>Legumin type B</fullName>
    </recommendedName>
    <component>
        <recommendedName>
            <fullName>Legumin type B alpha chain</fullName>
        </recommendedName>
        <alternativeName>
            <fullName>Legumin type B acidic chain</fullName>
        </alternativeName>
    </component>
    <component>
        <recommendedName>
            <fullName>Legumin type B beta chain</fullName>
        </recommendedName>
        <alternativeName>
            <fullName>Legumin type B basic chain</fullName>
        </alternativeName>
    </component>
</protein>
<keyword id="KW-1015">Disulfide bond</keyword>
<keyword id="KW-0708">Seed storage protein</keyword>
<keyword id="KW-0758">Storage protein</keyword>
<accession>P16079</accession>
<reference key="1">
    <citation type="journal article" date="1989" name="Plant Mol. Biol.">
        <title>The legumin gene family: structure and evolutionary implications of Vicia faba B-type genes and pseudogenes.</title>
        <authorList>
            <person name="Heim U."/>
            <person name="Schubert R."/>
            <person name="Baeumlein H."/>
            <person name="Wobus U."/>
        </authorList>
    </citation>
    <scope>NUCLEOTIDE SEQUENCE [GENOMIC DNA]</scope>
    <source>
        <strain>cv. Fribo</strain>
        <tissue>Leaf</tissue>
    </source>
</reference>
<feature type="chain" id="PRO_0000032080" description="Legumin type B alpha chain">
    <location>
        <begin position="1" status="less than"/>
        <end position="148"/>
    </location>
</feature>
<feature type="chain" id="PRO_0000032081" description="Legumin type B beta chain">
    <location>
        <begin position="149"/>
        <end position="329"/>
    </location>
</feature>
<feature type="domain" description="Cupin type-1" evidence="1">
    <location>
        <begin position="161"/>
        <end position="308"/>
    </location>
</feature>
<feature type="region of interest" description="Disordered" evidence="2">
    <location>
        <begin position="47"/>
        <end position="79"/>
    </location>
</feature>
<feature type="region of interest" description="Disordered" evidence="2">
    <location>
        <begin position="97"/>
        <end position="149"/>
    </location>
</feature>
<feature type="compositionally biased region" description="Basic and acidic residues" evidence="2">
    <location>
        <begin position="99"/>
        <end position="112"/>
    </location>
</feature>
<feature type="compositionally biased region" description="Acidic residues" evidence="2">
    <location>
        <begin position="129"/>
        <end position="138"/>
    </location>
</feature>
<feature type="disulfide bond" description="Interchain (between alpha and beta chains)" evidence="1">
    <location>
        <begin status="unknown"/>
        <end position="155"/>
    </location>
</feature>
<feature type="non-terminal residue">
    <location>
        <position position="1"/>
    </location>
</feature>
<sequence length="329" mass="37089">GIPYWTYNNGDEPLVAISLLDTSNIANQLDSTPRVFYLGGNPEVEFPETQEEQQERHQQKHSLPVGRRGGQHQQEEDGNSVLSGFSSEFLAQTFNTEEDTAKRLRSPRDKRNQIVRVEGGLRIINPEGQQEEEEEEEEEKQRSEQGRNGLEETICSLKIRENIAQPARADLYNPRAGSISTANSLTLPILRYLRLSAEYVRLYRNGIYAPHWNINANSLLYVIRGEGRVRIVNSQGNAVFDNKVRKGQLVVVPQNFVVAEQAGEEEGLEYLVFKTNDRAAVSHVQQVFRATPADVLANAFGLRQRQVTELKLSGNRGPLVHPQSQSQSN</sequence>
<evidence type="ECO:0000255" key="1"/>
<evidence type="ECO:0000256" key="2">
    <source>
        <dbReference type="SAM" id="MobiDB-lite"/>
    </source>
</evidence>
<evidence type="ECO:0000305" key="3"/>
<organism>
    <name type="scientific">Vicia faba</name>
    <name type="common">Broad bean</name>
    <name type="synonym">Faba vulgaris</name>
    <dbReference type="NCBI Taxonomy" id="3906"/>
    <lineage>
        <taxon>Eukaryota</taxon>
        <taxon>Viridiplantae</taxon>
        <taxon>Streptophyta</taxon>
        <taxon>Embryophyta</taxon>
        <taxon>Tracheophyta</taxon>
        <taxon>Spermatophyta</taxon>
        <taxon>Magnoliopsida</taxon>
        <taxon>eudicotyledons</taxon>
        <taxon>Gunneridae</taxon>
        <taxon>Pentapetalae</taxon>
        <taxon>rosids</taxon>
        <taxon>fabids</taxon>
        <taxon>Fabales</taxon>
        <taxon>Fabaceae</taxon>
        <taxon>Papilionoideae</taxon>
        <taxon>50 kb inversion clade</taxon>
        <taxon>NPAAA clade</taxon>
        <taxon>Hologalegina</taxon>
        <taxon>IRL clade</taxon>
        <taxon>Fabeae</taxon>
        <taxon>Vicia</taxon>
    </lineage>
</organism>
<proteinExistence type="inferred from homology"/>